<evidence type="ECO:0000255" key="1"/>
<evidence type="ECO:0000255" key="2">
    <source>
        <dbReference type="PROSITE-ProRule" id="PRU00084"/>
    </source>
</evidence>
<evidence type="ECO:0000256" key="3">
    <source>
        <dbReference type="SAM" id="MobiDB-lite"/>
    </source>
</evidence>
<evidence type="ECO:0000269" key="4">
    <source>
    </source>
</evidence>
<evidence type="ECO:0000269" key="5">
    <source>
    </source>
</evidence>
<evidence type="ECO:0000303" key="6">
    <source>
    </source>
</evidence>
<evidence type="ECO:0000303" key="7">
    <source>
    </source>
</evidence>
<evidence type="ECO:0000303" key="8">
    <source>
    </source>
</evidence>
<evidence type="ECO:0000305" key="9"/>
<name>FRMD3_HUMAN</name>
<gene>
    <name type="primary">FRMD3</name>
    <name type="synonym">EPB41L4O</name>
</gene>
<reference key="1">
    <citation type="journal article" date="2003" name="J. Hum. Genet.">
        <title>Molecular cloning and characterization of the protein 4.1O gene, a novel member of the protein 4.1 family with focal expression in ovary.</title>
        <authorList>
            <person name="Ni X."/>
            <person name="Ji C."/>
            <person name="Cao G."/>
            <person name="Cheng H."/>
            <person name="Guo L."/>
            <person name="Gu S."/>
            <person name="Ying K."/>
            <person name="Zhao R.C."/>
            <person name="Mao Y."/>
        </authorList>
    </citation>
    <scope>NUCLEOTIDE SEQUENCE [MRNA] (ISOFORM 5)</scope>
    <scope>TISSUE SPECIFICITY</scope>
    <scope>DEVELOPMENTAL STAGE</scope>
    <source>
        <tissue>Fetal brain</tissue>
    </source>
</reference>
<reference key="2">
    <citation type="journal article" date="2004" name="Nat. Genet.">
        <title>Complete sequencing and characterization of 21,243 full-length human cDNAs.</title>
        <authorList>
            <person name="Ota T."/>
            <person name="Suzuki Y."/>
            <person name="Nishikawa T."/>
            <person name="Otsuki T."/>
            <person name="Sugiyama T."/>
            <person name="Irie R."/>
            <person name="Wakamatsu A."/>
            <person name="Hayashi K."/>
            <person name="Sato H."/>
            <person name="Nagai K."/>
            <person name="Kimura K."/>
            <person name="Makita H."/>
            <person name="Sekine M."/>
            <person name="Obayashi M."/>
            <person name="Nishi T."/>
            <person name="Shibahara T."/>
            <person name="Tanaka T."/>
            <person name="Ishii S."/>
            <person name="Yamamoto J."/>
            <person name="Saito K."/>
            <person name="Kawai Y."/>
            <person name="Isono Y."/>
            <person name="Nakamura Y."/>
            <person name="Nagahari K."/>
            <person name="Murakami K."/>
            <person name="Yasuda T."/>
            <person name="Iwayanagi T."/>
            <person name="Wagatsuma M."/>
            <person name="Shiratori A."/>
            <person name="Sudo H."/>
            <person name="Hosoiri T."/>
            <person name="Kaku Y."/>
            <person name="Kodaira H."/>
            <person name="Kondo H."/>
            <person name="Sugawara M."/>
            <person name="Takahashi M."/>
            <person name="Kanda K."/>
            <person name="Yokoi T."/>
            <person name="Furuya T."/>
            <person name="Kikkawa E."/>
            <person name="Omura Y."/>
            <person name="Abe K."/>
            <person name="Kamihara K."/>
            <person name="Katsuta N."/>
            <person name="Sato K."/>
            <person name="Tanikawa M."/>
            <person name="Yamazaki M."/>
            <person name="Ninomiya K."/>
            <person name="Ishibashi T."/>
            <person name="Yamashita H."/>
            <person name="Murakawa K."/>
            <person name="Fujimori K."/>
            <person name="Tanai H."/>
            <person name="Kimata M."/>
            <person name="Watanabe M."/>
            <person name="Hiraoka S."/>
            <person name="Chiba Y."/>
            <person name="Ishida S."/>
            <person name="Ono Y."/>
            <person name="Takiguchi S."/>
            <person name="Watanabe S."/>
            <person name="Yosida M."/>
            <person name="Hotuta T."/>
            <person name="Kusano J."/>
            <person name="Kanehori K."/>
            <person name="Takahashi-Fujii A."/>
            <person name="Hara H."/>
            <person name="Tanase T.-O."/>
            <person name="Nomura Y."/>
            <person name="Togiya S."/>
            <person name="Komai F."/>
            <person name="Hara R."/>
            <person name="Takeuchi K."/>
            <person name="Arita M."/>
            <person name="Imose N."/>
            <person name="Musashino K."/>
            <person name="Yuuki H."/>
            <person name="Oshima A."/>
            <person name="Sasaki N."/>
            <person name="Aotsuka S."/>
            <person name="Yoshikawa Y."/>
            <person name="Matsunawa H."/>
            <person name="Ichihara T."/>
            <person name="Shiohata N."/>
            <person name="Sano S."/>
            <person name="Moriya S."/>
            <person name="Momiyama H."/>
            <person name="Satoh N."/>
            <person name="Takami S."/>
            <person name="Terashima Y."/>
            <person name="Suzuki O."/>
            <person name="Nakagawa S."/>
            <person name="Senoh A."/>
            <person name="Mizoguchi H."/>
            <person name="Goto Y."/>
            <person name="Shimizu F."/>
            <person name="Wakebe H."/>
            <person name="Hishigaki H."/>
            <person name="Watanabe T."/>
            <person name="Sugiyama A."/>
            <person name="Takemoto M."/>
            <person name="Kawakami B."/>
            <person name="Yamazaki M."/>
            <person name="Watanabe K."/>
            <person name="Kumagai A."/>
            <person name="Itakura S."/>
            <person name="Fukuzumi Y."/>
            <person name="Fujimori Y."/>
            <person name="Komiyama M."/>
            <person name="Tashiro H."/>
            <person name="Tanigami A."/>
            <person name="Fujiwara T."/>
            <person name="Ono T."/>
            <person name="Yamada K."/>
            <person name="Fujii Y."/>
            <person name="Ozaki K."/>
            <person name="Hirao M."/>
            <person name="Ohmori Y."/>
            <person name="Kawabata A."/>
            <person name="Hikiji T."/>
            <person name="Kobatake N."/>
            <person name="Inagaki H."/>
            <person name="Ikema Y."/>
            <person name="Okamoto S."/>
            <person name="Okitani R."/>
            <person name="Kawakami T."/>
            <person name="Noguchi S."/>
            <person name="Itoh T."/>
            <person name="Shigeta K."/>
            <person name="Senba T."/>
            <person name="Matsumura K."/>
            <person name="Nakajima Y."/>
            <person name="Mizuno T."/>
            <person name="Morinaga M."/>
            <person name="Sasaki M."/>
            <person name="Togashi T."/>
            <person name="Oyama M."/>
            <person name="Hata H."/>
            <person name="Watanabe M."/>
            <person name="Komatsu T."/>
            <person name="Mizushima-Sugano J."/>
            <person name="Satoh T."/>
            <person name="Shirai Y."/>
            <person name="Takahashi Y."/>
            <person name="Nakagawa K."/>
            <person name="Okumura K."/>
            <person name="Nagase T."/>
            <person name="Nomura N."/>
            <person name="Kikuchi H."/>
            <person name="Masuho Y."/>
            <person name="Yamashita R."/>
            <person name="Nakai K."/>
            <person name="Yada T."/>
            <person name="Nakamura Y."/>
            <person name="Ohara O."/>
            <person name="Isogai T."/>
            <person name="Sugano S."/>
        </authorList>
    </citation>
    <scope>NUCLEOTIDE SEQUENCE [LARGE SCALE MRNA] (ISOFORM 1)</scope>
    <scope>NUCLEOTIDE SEQUENCE [LARGE SCALE MRNA] OF 34-597 (ISOFORM 2)</scope>
    <source>
        <tissue>Cerebellum</tissue>
    </source>
</reference>
<reference key="3">
    <citation type="journal article" date="2007" name="BMC Genomics">
        <title>The full-ORF clone resource of the German cDNA consortium.</title>
        <authorList>
            <person name="Bechtel S."/>
            <person name="Rosenfelder H."/>
            <person name="Duda A."/>
            <person name="Schmidt C.P."/>
            <person name="Ernst U."/>
            <person name="Wellenreuther R."/>
            <person name="Mehrle A."/>
            <person name="Schuster C."/>
            <person name="Bahr A."/>
            <person name="Bloecker H."/>
            <person name="Heubner D."/>
            <person name="Hoerlein A."/>
            <person name="Michel G."/>
            <person name="Wedler H."/>
            <person name="Koehrer K."/>
            <person name="Ottenwaelder B."/>
            <person name="Poustka A."/>
            <person name="Wiemann S."/>
            <person name="Schupp I."/>
        </authorList>
    </citation>
    <scope>NUCLEOTIDE SEQUENCE [LARGE SCALE MRNA] (ISOFORM 1)</scope>
</reference>
<reference key="4">
    <citation type="journal article" date="2004" name="Nature">
        <title>DNA sequence and analysis of human chromosome 9.</title>
        <authorList>
            <person name="Humphray S.J."/>
            <person name="Oliver K."/>
            <person name="Hunt A.R."/>
            <person name="Plumb R.W."/>
            <person name="Loveland J.E."/>
            <person name="Howe K.L."/>
            <person name="Andrews T.D."/>
            <person name="Searle S."/>
            <person name="Hunt S.E."/>
            <person name="Scott C.E."/>
            <person name="Jones M.C."/>
            <person name="Ainscough R."/>
            <person name="Almeida J.P."/>
            <person name="Ambrose K.D."/>
            <person name="Ashwell R.I.S."/>
            <person name="Babbage A.K."/>
            <person name="Babbage S."/>
            <person name="Bagguley C.L."/>
            <person name="Bailey J."/>
            <person name="Banerjee R."/>
            <person name="Barker D.J."/>
            <person name="Barlow K.F."/>
            <person name="Bates K."/>
            <person name="Beasley H."/>
            <person name="Beasley O."/>
            <person name="Bird C.P."/>
            <person name="Bray-Allen S."/>
            <person name="Brown A.J."/>
            <person name="Brown J.Y."/>
            <person name="Burford D."/>
            <person name="Burrill W."/>
            <person name="Burton J."/>
            <person name="Carder C."/>
            <person name="Carter N.P."/>
            <person name="Chapman J.C."/>
            <person name="Chen Y."/>
            <person name="Clarke G."/>
            <person name="Clark S.Y."/>
            <person name="Clee C.M."/>
            <person name="Clegg S."/>
            <person name="Collier R.E."/>
            <person name="Corby N."/>
            <person name="Crosier M."/>
            <person name="Cummings A.T."/>
            <person name="Davies J."/>
            <person name="Dhami P."/>
            <person name="Dunn M."/>
            <person name="Dutta I."/>
            <person name="Dyer L.W."/>
            <person name="Earthrowl M.E."/>
            <person name="Faulkner L."/>
            <person name="Fleming C.J."/>
            <person name="Frankish A."/>
            <person name="Frankland J.A."/>
            <person name="French L."/>
            <person name="Fricker D.G."/>
            <person name="Garner P."/>
            <person name="Garnett J."/>
            <person name="Ghori J."/>
            <person name="Gilbert J.G.R."/>
            <person name="Glison C."/>
            <person name="Grafham D.V."/>
            <person name="Gribble S."/>
            <person name="Griffiths C."/>
            <person name="Griffiths-Jones S."/>
            <person name="Grocock R."/>
            <person name="Guy J."/>
            <person name="Hall R.E."/>
            <person name="Hammond S."/>
            <person name="Harley J.L."/>
            <person name="Harrison E.S.I."/>
            <person name="Hart E.A."/>
            <person name="Heath P.D."/>
            <person name="Henderson C.D."/>
            <person name="Hopkins B.L."/>
            <person name="Howard P.J."/>
            <person name="Howden P.J."/>
            <person name="Huckle E."/>
            <person name="Johnson C."/>
            <person name="Johnson D."/>
            <person name="Joy A.A."/>
            <person name="Kay M."/>
            <person name="Keenan S."/>
            <person name="Kershaw J.K."/>
            <person name="Kimberley A.M."/>
            <person name="King A."/>
            <person name="Knights A."/>
            <person name="Laird G.K."/>
            <person name="Langford C."/>
            <person name="Lawlor S."/>
            <person name="Leongamornlert D.A."/>
            <person name="Leversha M."/>
            <person name="Lloyd C."/>
            <person name="Lloyd D.M."/>
            <person name="Lovell J."/>
            <person name="Martin S."/>
            <person name="Mashreghi-Mohammadi M."/>
            <person name="Matthews L."/>
            <person name="McLaren S."/>
            <person name="McLay K.E."/>
            <person name="McMurray A."/>
            <person name="Milne S."/>
            <person name="Nickerson T."/>
            <person name="Nisbett J."/>
            <person name="Nordsiek G."/>
            <person name="Pearce A.V."/>
            <person name="Peck A.I."/>
            <person name="Porter K.M."/>
            <person name="Pandian R."/>
            <person name="Pelan S."/>
            <person name="Phillimore B."/>
            <person name="Povey S."/>
            <person name="Ramsey Y."/>
            <person name="Rand V."/>
            <person name="Scharfe M."/>
            <person name="Sehra H.K."/>
            <person name="Shownkeen R."/>
            <person name="Sims S.K."/>
            <person name="Skuce C.D."/>
            <person name="Smith M."/>
            <person name="Steward C.A."/>
            <person name="Swarbreck D."/>
            <person name="Sycamore N."/>
            <person name="Tester J."/>
            <person name="Thorpe A."/>
            <person name="Tracey A."/>
            <person name="Tromans A."/>
            <person name="Thomas D.W."/>
            <person name="Wall M."/>
            <person name="Wallis J.M."/>
            <person name="West A.P."/>
            <person name="Whitehead S.L."/>
            <person name="Willey D.L."/>
            <person name="Williams S.A."/>
            <person name="Wilming L."/>
            <person name="Wray P.W."/>
            <person name="Young L."/>
            <person name="Ashurst J.L."/>
            <person name="Coulson A."/>
            <person name="Blocker H."/>
            <person name="Durbin R.M."/>
            <person name="Sulston J.E."/>
            <person name="Hubbard T."/>
            <person name="Jackson M.J."/>
            <person name="Bentley D.R."/>
            <person name="Beck S."/>
            <person name="Rogers J."/>
            <person name="Dunham I."/>
        </authorList>
    </citation>
    <scope>NUCLEOTIDE SEQUENCE [LARGE SCALE GENOMIC DNA]</scope>
</reference>
<reference key="5">
    <citation type="submission" date="2005-07" db="EMBL/GenBank/DDBJ databases">
        <authorList>
            <person name="Mural R.J."/>
            <person name="Istrail S."/>
            <person name="Sutton G.G."/>
            <person name="Florea L."/>
            <person name="Halpern A.L."/>
            <person name="Mobarry C.M."/>
            <person name="Lippert R."/>
            <person name="Walenz B."/>
            <person name="Shatkay H."/>
            <person name="Dew I."/>
            <person name="Miller J.R."/>
            <person name="Flanigan M.J."/>
            <person name="Edwards N.J."/>
            <person name="Bolanos R."/>
            <person name="Fasulo D."/>
            <person name="Halldorsson B.V."/>
            <person name="Hannenhalli S."/>
            <person name="Turner R."/>
            <person name="Yooseph S."/>
            <person name="Lu F."/>
            <person name="Nusskern D.R."/>
            <person name="Shue B.C."/>
            <person name="Zheng X.H."/>
            <person name="Zhong F."/>
            <person name="Delcher A.L."/>
            <person name="Huson D.H."/>
            <person name="Kravitz S.A."/>
            <person name="Mouchard L."/>
            <person name="Reinert K."/>
            <person name="Remington K.A."/>
            <person name="Clark A.G."/>
            <person name="Waterman M.S."/>
            <person name="Eichler E.E."/>
            <person name="Adams M.D."/>
            <person name="Hunkapiller M.W."/>
            <person name="Myers E.W."/>
            <person name="Venter J.C."/>
        </authorList>
    </citation>
    <scope>NUCLEOTIDE SEQUENCE [LARGE SCALE GENOMIC DNA]</scope>
</reference>
<reference key="6">
    <citation type="journal article" date="2004" name="Genome Res.">
        <title>The status, quality, and expansion of the NIH full-length cDNA project: the Mammalian Gene Collection (MGC).</title>
        <authorList>
            <consortium name="The MGC Project Team"/>
        </authorList>
    </citation>
    <scope>NUCLEOTIDE SEQUENCE [LARGE SCALE MRNA] (ISOFORMS 3 AND 4)</scope>
    <source>
        <tissue>Brain</tissue>
        <tissue>Placenta</tissue>
    </source>
</reference>
<reference key="7">
    <citation type="submission" date="2005-04" db="EMBL/GenBank/DDBJ databases">
        <authorList>
            <person name="Totoki Y."/>
            <person name="Toyoda A."/>
            <person name="Takeda T."/>
            <person name="Sakaki Y."/>
            <person name="Tanaka A."/>
            <person name="Yokoyama S."/>
        </authorList>
    </citation>
    <scope>NUCLEOTIDE SEQUENCE [LARGE SCALE MRNA] OF 17-597 (ISOFORM 1)</scope>
    <source>
        <tissue>Kidney</tissue>
    </source>
</reference>
<reference key="8">
    <citation type="journal article" date="2007" name="Oncogene">
        <title>FRMD3, a novel putative tumour suppressor in NSCLC.</title>
        <authorList>
            <person name="Haase D."/>
            <person name="Meister M."/>
            <person name="Muley T."/>
            <person name="Hess J."/>
            <person name="Teurich S."/>
            <person name="Schnabel P."/>
            <person name="Hartenstein B."/>
            <person name="Angel P."/>
        </authorList>
    </citation>
    <scope>FUNCTION</scope>
</reference>
<keyword id="KW-0025">Alternative splicing</keyword>
<keyword id="KW-0472">Membrane</keyword>
<keyword id="KW-1267">Proteomics identification</keyword>
<keyword id="KW-1185">Reference proteome</keyword>
<keyword id="KW-0812">Transmembrane</keyword>
<keyword id="KW-1133">Transmembrane helix</keyword>
<feature type="chain" id="PRO_0000318098" description="FERM domain-containing protein 3">
    <location>
        <begin position="1"/>
        <end position="597"/>
    </location>
</feature>
<feature type="transmembrane region" description="Helical" evidence="1">
    <location>
        <begin position="531"/>
        <end position="551"/>
    </location>
</feature>
<feature type="domain" description="FERM" evidence="2">
    <location>
        <begin position="32"/>
        <end position="312"/>
    </location>
</feature>
<feature type="region of interest" description="Disordered" evidence="3">
    <location>
        <begin position="383"/>
        <end position="403"/>
    </location>
</feature>
<feature type="splice variant" id="VSP_031162" description="In isoform 4." evidence="8">
    <location>
        <begin position="1"/>
        <end position="344"/>
    </location>
</feature>
<feature type="splice variant" id="VSP_031163" description="In isoform 3." evidence="8">
    <location>
        <begin position="1"/>
        <end position="194"/>
    </location>
</feature>
<feature type="splice variant" id="VSP_031164" description="In isoform 5." evidence="6">
    <original>MFASCHCVPRGRRTMKMIHFRSSSVKSLSQEMRCTIRLLDDSEISCHIQ</original>
    <variation>MQLSK</variation>
    <location>
        <begin position="1"/>
        <end position="49"/>
    </location>
</feature>
<feature type="splice variant" id="VSP_031165" description="In isoform 3." evidence="8">
    <original>KNEL</original>
    <variation>MVFR</variation>
    <location>
        <begin position="195"/>
        <end position="198"/>
    </location>
</feature>
<feature type="splice variant" id="VSP_031166" description="In isoform 4." evidence="8">
    <original>SSKIQREPPEVHRANITQSRSSHSLNKQLIINMEPLQPLLPSPSEQEEELPLGE</original>
    <variation>MQAEETKGIGITSMAKCLVKIQTRRSLQLHMVNHCNSNVFVRLLRLGSKVTARNT</variation>
    <location>
        <begin position="345"/>
        <end position="398"/>
    </location>
</feature>
<feature type="splice variant" id="VSP_031167" description="In isoform 2, isoform 3 and isoform 4." evidence="7 8">
    <original>GIDLSFLCEIRQTPEFEQFHYEYYCPLKEWVAGKVHLILYMLGCS</original>
    <variation>VSMQ</variation>
    <location>
        <begin position="553"/>
        <end position="597"/>
    </location>
</feature>
<feature type="sequence variant" id="VAR_048366" description="In dbSNP:rs4877747.">
    <original>D</original>
    <variation>Y</variation>
    <location>
        <position position="485"/>
    </location>
</feature>
<feature type="sequence conflict" description="In Ref. 1; AAN52119." evidence="9" ref="1">
    <original>Q</original>
    <variation>R</variation>
    <location>
        <position position="248"/>
    </location>
</feature>
<feature type="sequence conflict" description="In Ref. 1; AAN52119." evidence="9" ref="1">
    <original>I</original>
    <variation>V</variation>
    <location>
        <position position="554"/>
    </location>
</feature>
<proteinExistence type="evidence at protein level"/>
<organism>
    <name type="scientific">Homo sapiens</name>
    <name type="common">Human</name>
    <dbReference type="NCBI Taxonomy" id="9606"/>
    <lineage>
        <taxon>Eukaryota</taxon>
        <taxon>Metazoa</taxon>
        <taxon>Chordata</taxon>
        <taxon>Craniata</taxon>
        <taxon>Vertebrata</taxon>
        <taxon>Euteleostomi</taxon>
        <taxon>Mammalia</taxon>
        <taxon>Eutheria</taxon>
        <taxon>Euarchontoglires</taxon>
        <taxon>Primates</taxon>
        <taxon>Haplorrhini</taxon>
        <taxon>Catarrhini</taxon>
        <taxon>Hominidae</taxon>
        <taxon>Homo</taxon>
    </lineage>
</organism>
<comment type="function">
    <text evidence="5">Putative tumor suppressor gene that may be implicated in the origin and progression of lung cancer.</text>
</comment>
<comment type="interaction">
    <interactant intactId="EBI-6911547">
        <id>A2A2Y4</id>
    </interactant>
    <interactant intactId="EBI-2807956">
        <id>Q96FZ5</id>
        <label>CMTM7</label>
    </interactant>
    <organismsDiffer>false</organismsDiffer>
    <experiments>3</experiments>
</comment>
<comment type="interaction">
    <interactant intactId="EBI-6911547">
        <id>A2A2Y4</id>
    </interactant>
    <interactant intactId="EBI-1058710">
        <id>O43169</id>
        <label>CYB5B</label>
    </interactant>
    <organismsDiffer>false</organismsDiffer>
    <experiments>3</experiments>
</comment>
<comment type="interaction">
    <interactant intactId="EBI-6911547">
        <id>A2A2Y4</id>
    </interactant>
    <interactant intactId="EBI-10266796">
        <id>Q8N5M9</id>
        <label>JAGN1</label>
    </interactant>
    <organismsDiffer>false</organismsDiffer>
    <experiments>3</experiments>
</comment>
<comment type="interaction">
    <interactant intactId="EBI-6911547">
        <id>A2A2Y4</id>
    </interactant>
    <interactant intactId="EBI-10262547">
        <id>Q8IXM6</id>
        <label>NRM</label>
    </interactant>
    <organismsDiffer>false</organismsDiffer>
    <experiments>3</experiments>
</comment>
<comment type="interaction">
    <interactant intactId="EBI-6911547">
        <id>A2A2Y4</id>
    </interactant>
    <interactant intactId="EBI-10485931">
        <id>Q5VZY2</id>
        <label>PLPP4</label>
    </interactant>
    <organismsDiffer>false</organismsDiffer>
    <experiments>3</experiments>
</comment>
<comment type="interaction">
    <interactant intactId="EBI-6911547">
        <id>A2A2Y4</id>
    </interactant>
    <interactant intactId="EBI-10329948">
        <id>Q9Y6X1</id>
        <label>SERP1</label>
    </interactant>
    <organismsDiffer>false</organismsDiffer>
    <experiments>3</experiments>
</comment>
<comment type="interaction">
    <interactant intactId="EBI-6911547">
        <id>A2A2Y4</id>
    </interactant>
    <interactant intactId="EBI-749270">
        <id>Q8N6R1</id>
        <label>SERP2</label>
    </interactant>
    <organismsDiffer>false</organismsDiffer>
    <experiments>3</experiments>
</comment>
<comment type="interaction">
    <interactant intactId="EBI-6911547">
        <id>A2A2Y4</id>
    </interactant>
    <interactant intactId="EBI-12363689">
        <id>Q96G79</id>
        <label>SLC35A4</label>
    </interactant>
    <organismsDiffer>false</organismsDiffer>
    <experiments>3</experiments>
</comment>
<comment type="interaction">
    <interactant intactId="EBI-6911547">
        <id>A2A2Y4</id>
    </interactant>
    <interactant intactId="EBI-11994282">
        <id>Q5SNT2-2</id>
        <label>TMEM201</label>
    </interactant>
    <organismsDiffer>false</organismsDiffer>
    <experiments>3</experiments>
</comment>
<comment type="interaction">
    <interactant intactId="EBI-6911547">
        <id>A2A2Y4</id>
    </interactant>
    <interactant intactId="EBI-10173151">
        <id>A2RU14</id>
        <label>TMEM218</label>
    </interactant>
    <organismsDiffer>false</organismsDiffer>
    <experiments>3</experiments>
</comment>
<comment type="interaction">
    <interactant intactId="EBI-6911547">
        <id>A2A2Y4</id>
    </interactant>
    <interactant intactId="EBI-12111910">
        <id>Q5BJF2</id>
        <label>TMEM97</label>
    </interactant>
    <organismsDiffer>false</organismsDiffer>
    <experiments>3</experiments>
</comment>
<comment type="interaction">
    <interactant intactId="EBI-6911547">
        <id>A2A2Y4</id>
    </interactant>
    <interactant intactId="EBI-718439">
        <id>O95159</id>
        <label>ZFPL1</label>
    </interactant>
    <organismsDiffer>false</organismsDiffer>
    <experiments>3</experiments>
</comment>
<comment type="subcellular location">
    <subcellularLocation>
        <location evidence="9">Membrane</location>
        <topology evidence="9">Single-pass membrane protein</topology>
    </subcellularLocation>
</comment>
<comment type="alternative products">
    <event type="alternative splicing"/>
    <isoform>
        <id>A2A2Y4-1</id>
        <name>1</name>
        <sequence type="displayed"/>
    </isoform>
    <isoform>
        <id>A2A2Y4-2</id>
        <name>2</name>
        <sequence type="described" ref="VSP_031167"/>
    </isoform>
    <isoform>
        <id>A2A2Y4-3</id>
        <name>3</name>
        <sequence type="described" ref="VSP_031163 VSP_031165 VSP_031167"/>
    </isoform>
    <isoform>
        <id>A2A2Y4-4</id>
        <name>4</name>
        <sequence type="described" ref="VSP_031162 VSP_031166 VSP_031167"/>
    </isoform>
    <isoform>
        <id>A2A2Y4-5</id>
        <name>5</name>
        <sequence type="described" ref="VSP_031164"/>
    </isoform>
</comment>
<comment type="tissue specificity">
    <text evidence="4">Ovary-specific.</text>
</comment>
<comment type="developmental stage">
    <text evidence="4">Expressed in skeletal muscle, lower levels in thymus and brain.</text>
</comment>
<comment type="sequence caution" evidence="9">
    <conflict type="erroneous initiation">
        <sequence resource="EMBL-CDS" id="BAC04321"/>
    </conflict>
</comment>
<comment type="sequence caution" evidence="9">
    <conflict type="erroneous initiation">
        <sequence resource="EMBL-CDS" id="EAW62650"/>
    </conflict>
</comment>
<sequence>MFASCHCVPRGRRTMKMIHFRSSSVKSLSQEMRCTIRLLDDSEISCHIQRETKGQFLIDHICNYYSLLEKDYFGIRYVDPEKQRHWLEPNKSIFKQMKTHPPYTMCFRVKFYPHEPLKIKEELTRYLLYLQIKRDIFHGRLLCSFSDAAYLGACIVQAELGDYDPDEHPENYISEFEIFPKQSQKLERKIVEIHKNELRGQSPPVAEFNLLLKAHTLETYGVDPHPCKDSTGTTTFLGFTAAGFVVFQGNKRIHLIKWPDVCKLKFEGKTFYVIGTQKEKKAMLAFHTSTPAACKHLWKCGVENQAFYKYAKSSQIKTVSSSKIFFKGSRFRYSGKVAKEVVEASSKIQREPPEVHRANITQSRSSHSLNKQLIINMEPLQPLLPSPSEQEEELPLGEGVPLPKEENISAPLISSSPVKAAREYEDPPSEEEDKIKEEPLTISELVYNPSASLLPTPVDDDEIDMLFDCPSRLELEREDTDSFEDLEADENAFLIAEEEELKEARRALSWSYDILTGHIRVNPLVKSFSRLLVVGLGLLLFVFPLLLLLLESGIDLSFLCEIRQTPEFEQFHYEYYCPLKEWVAGKVHLILYMLGCS</sequence>
<accession>A2A2Y4</accession>
<accession>A8MQB0</accession>
<accession>B4DN14</accession>
<accession>Q53EP2</accession>
<accession>Q5JV59</accession>
<accession>Q5VZA1</accession>
<accession>Q86WP8</accession>
<accession>Q8IZ44</accession>
<accession>Q8N3Y5</accession>
<accession>Q8N9L2</accession>
<dbReference type="EMBL" id="AY137774">
    <property type="protein sequence ID" value="AAN52119.1"/>
    <property type="molecule type" value="mRNA"/>
</dbReference>
<dbReference type="EMBL" id="AK094281">
    <property type="protein sequence ID" value="BAC04321.1"/>
    <property type="status" value="ALT_INIT"/>
    <property type="molecule type" value="mRNA"/>
</dbReference>
<dbReference type="EMBL" id="AK297722">
    <property type="protein sequence ID" value="BAG60076.1"/>
    <property type="molecule type" value="mRNA"/>
</dbReference>
<dbReference type="EMBL" id="EF560742">
    <property type="protein sequence ID" value="ABQ59052.1"/>
    <property type="molecule type" value="mRNA"/>
</dbReference>
<dbReference type="EMBL" id="AL161786">
    <property type="status" value="NOT_ANNOTATED_CDS"/>
    <property type="molecule type" value="Genomic_DNA"/>
</dbReference>
<dbReference type="EMBL" id="AL137847">
    <property type="status" value="NOT_ANNOTATED_CDS"/>
    <property type="molecule type" value="Genomic_DNA"/>
</dbReference>
<dbReference type="EMBL" id="AL450026">
    <property type="status" value="NOT_ANNOTATED_CDS"/>
    <property type="molecule type" value="Genomic_DNA"/>
</dbReference>
<dbReference type="EMBL" id="CH471089">
    <property type="protein sequence ID" value="EAW62647.1"/>
    <property type="molecule type" value="Genomic_DNA"/>
</dbReference>
<dbReference type="EMBL" id="CH471089">
    <property type="protein sequence ID" value="EAW62649.1"/>
    <property type="molecule type" value="Genomic_DNA"/>
</dbReference>
<dbReference type="EMBL" id="CH471089">
    <property type="protein sequence ID" value="EAW62650.1"/>
    <property type="status" value="ALT_INIT"/>
    <property type="molecule type" value="Genomic_DNA"/>
</dbReference>
<dbReference type="EMBL" id="CH471089">
    <property type="protein sequence ID" value="EAW62651.1"/>
    <property type="molecule type" value="Genomic_DNA"/>
</dbReference>
<dbReference type="EMBL" id="BC023560">
    <property type="protein sequence ID" value="AAH23560.1"/>
    <property type="molecule type" value="mRNA"/>
</dbReference>
<dbReference type="EMBL" id="BC037253">
    <property type="protein sequence ID" value="AAH37253.1"/>
    <property type="molecule type" value="mRNA"/>
</dbReference>
<dbReference type="EMBL" id="AK223597">
    <property type="protein sequence ID" value="BAD97317.1"/>
    <property type="molecule type" value="mRNA"/>
</dbReference>
<dbReference type="CCDS" id="CCDS43840.1">
    <molecule id="A2A2Y4-1"/>
</dbReference>
<dbReference type="CCDS" id="CCDS59131.1">
    <molecule id="A2A2Y4-4"/>
</dbReference>
<dbReference type="CCDS" id="CCDS59132.1">
    <molecule id="A2A2Y4-3"/>
</dbReference>
<dbReference type="CCDS" id="CCDS59133.1">
    <molecule id="A2A2Y4-2"/>
</dbReference>
<dbReference type="CCDS" id="CCDS75852.1">
    <molecule id="A2A2Y4-5"/>
</dbReference>
<dbReference type="RefSeq" id="NP_001231888.1">
    <molecule id="A2A2Y4-2"/>
    <property type="nucleotide sequence ID" value="NM_001244959.2"/>
</dbReference>
<dbReference type="RefSeq" id="NP_001231889.1">
    <molecule id="A2A2Y4-5"/>
    <property type="nucleotide sequence ID" value="NM_001244960.2"/>
</dbReference>
<dbReference type="RefSeq" id="NP_001231890.1">
    <molecule id="A2A2Y4-3"/>
    <property type="nucleotide sequence ID" value="NM_001244961.2"/>
</dbReference>
<dbReference type="RefSeq" id="NP_001231891.1">
    <molecule id="A2A2Y4-4"/>
    <property type="nucleotide sequence ID" value="NM_001244962.2"/>
</dbReference>
<dbReference type="RefSeq" id="NP_777598.3">
    <molecule id="A2A2Y4-1"/>
    <property type="nucleotide sequence ID" value="NM_174938.5"/>
</dbReference>
<dbReference type="SMR" id="A2A2Y4"/>
<dbReference type="BioGRID" id="129190">
    <property type="interactions" value="26"/>
</dbReference>
<dbReference type="FunCoup" id="A2A2Y4">
    <property type="interactions" value="180"/>
</dbReference>
<dbReference type="IntAct" id="A2A2Y4">
    <property type="interactions" value="24"/>
</dbReference>
<dbReference type="STRING" id="9606.ENSP00000303508"/>
<dbReference type="iPTMnet" id="A2A2Y4"/>
<dbReference type="PhosphoSitePlus" id="A2A2Y4"/>
<dbReference type="BioMuta" id="FRMD3"/>
<dbReference type="jPOST" id="A2A2Y4"/>
<dbReference type="MassIVE" id="A2A2Y4"/>
<dbReference type="PaxDb" id="9606-ENSP00000303508"/>
<dbReference type="PeptideAtlas" id="A2A2Y4"/>
<dbReference type="ProteomicsDB" id="234">
    <molecule id="A2A2Y4-1"/>
</dbReference>
<dbReference type="ProteomicsDB" id="235">
    <molecule id="A2A2Y4-2"/>
</dbReference>
<dbReference type="ProteomicsDB" id="236">
    <molecule id="A2A2Y4-3"/>
</dbReference>
<dbReference type="ProteomicsDB" id="237">
    <molecule id="A2A2Y4-4"/>
</dbReference>
<dbReference type="ProteomicsDB" id="238">
    <molecule id="A2A2Y4-5"/>
</dbReference>
<dbReference type="Antibodypedia" id="27519">
    <property type="antibodies" value="132 antibodies from 21 providers"/>
</dbReference>
<dbReference type="DNASU" id="257019"/>
<dbReference type="Ensembl" id="ENST00000304195.8">
    <molecule id="A2A2Y4-1"/>
    <property type="protein sequence ID" value="ENSP00000303508.3"/>
    <property type="gene ID" value="ENSG00000172159.16"/>
</dbReference>
<dbReference type="Ensembl" id="ENST00000328788.5">
    <molecule id="A2A2Y4-4"/>
    <property type="protein sequence ID" value="ENSP00000328615.1"/>
    <property type="gene ID" value="ENSG00000172159.16"/>
</dbReference>
<dbReference type="Ensembl" id="ENST00000376434.5">
    <molecule id="A2A2Y4-3"/>
    <property type="protein sequence ID" value="ENSP00000365617.1"/>
    <property type="gene ID" value="ENSG00000172159.16"/>
</dbReference>
<dbReference type="Ensembl" id="ENST00000376438.5">
    <molecule id="A2A2Y4-2"/>
    <property type="protein sequence ID" value="ENSP00000365621.1"/>
    <property type="gene ID" value="ENSG00000172159.16"/>
</dbReference>
<dbReference type="Ensembl" id="ENST00000621208.4">
    <molecule id="A2A2Y4-5"/>
    <property type="protein sequence ID" value="ENSP00000484839.1"/>
    <property type="gene ID" value="ENSG00000172159.16"/>
</dbReference>
<dbReference type="GeneID" id="257019"/>
<dbReference type="KEGG" id="hsa:257019"/>
<dbReference type="MANE-Select" id="ENST00000304195.8">
    <property type="protein sequence ID" value="ENSP00000303508.3"/>
    <property type="RefSeq nucleotide sequence ID" value="NM_174938.6"/>
    <property type="RefSeq protein sequence ID" value="NP_777598.3"/>
</dbReference>
<dbReference type="UCSC" id="uc004amq.1">
    <molecule id="A2A2Y4-1"/>
    <property type="organism name" value="human"/>
</dbReference>
<dbReference type="AGR" id="HGNC:24125"/>
<dbReference type="CTD" id="257019"/>
<dbReference type="DisGeNET" id="257019"/>
<dbReference type="GeneCards" id="FRMD3"/>
<dbReference type="HGNC" id="HGNC:24125">
    <property type="gene designation" value="FRMD3"/>
</dbReference>
<dbReference type="HPA" id="ENSG00000172159">
    <property type="expression patterns" value="Tissue enhanced (heart muscle, skeletal muscle, tongue)"/>
</dbReference>
<dbReference type="MIM" id="607619">
    <property type="type" value="gene"/>
</dbReference>
<dbReference type="neXtProt" id="NX_A2A2Y4"/>
<dbReference type="OpenTargets" id="ENSG00000172159"/>
<dbReference type="PharmGKB" id="PA134903920"/>
<dbReference type="VEuPathDB" id="HostDB:ENSG00000172159"/>
<dbReference type="eggNOG" id="KOG3530">
    <property type="taxonomic scope" value="Eukaryota"/>
</dbReference>
<dbReference type="GeneTree" id="ENSGT00940000158577"/>
<dbReference type="HOGENOM" id="CLU_113149_0_0_1"/>
<dbReference type="InParanoid" id="A2A2Y4"/>
<dbReference type="OMA" id="CPLRQWM"/>
<dbReference type="OrthoDB" id="6266673at2759"/>
<dbReference type="PAN-GO" id="A2A2Y4">
    <property type="GO annotations" value="2 GO annotations based on evolutionary models"/>
</dbReference>
<dbReference type="PhylomeDB" id="A2A2Y4"/>
<dbReference type="TreeFam" id="TF343477"/>
<dbReference type="PathwayCommons" id="A2A2Y4"/>
<dbReference type="SignaLink" id="A2A2Y4"/>
<dbReference type="BioGRID-ORCS" id="257019">
    <property type="hits" value="16 hits in 1149 CRISPR screens"/>
</dbReference>
<dbReference type="ChiTaRS" id="FRMD3">
    <property type="organism name" value="human"/>
</dbReference>
<dbReference type="GenomeRNAi" id="257019"/>
<dbReference type="Pharos" id="A2A2Y4">
    <property type="development level" value="Tbio"/>
</dbReference>
<dbReference type="PRO" id="PR:A2A2Y4"/>
<dbReference type="Proteomes" id="UP000005640">
    <property type="component" value="Chromosome 9"/>
</dbReference>
<dbReference type="RNAct" id="A2A2Y4">
    <property type="molecule type" value="protein"/>
</dbReference>
<dbReference type="Bgee" id="ENSG00000172159">
    <property type="expression patterns" value="Expressed in secondary oocyte and 194 other cell types or tissues"/>
</dbReference>
<dbReference type="ExpressionAtlas" id="A2A2Y4">
    <property type="expression patterns" value="baseline and differential"/>
</dbReference>
<dbReference type="GO" id="GO:0005856">
    <property type="term" value="C:cytoskeleton"/>
    <property type="evidence" value="ECO:0000318"/>
    <property type="project" value="GO_Central"/>
</dbReference>
<dbReference type="GO" id="GO:0016020">
    <property type="term" value="C:membrane"/>
    <property type="evidence" value="ECO:0007669"/>
    <property type="project" value="UniProtKB-SubCell"/>
</dbReference>
<dbReference type="GO" id="GO:0008092">
    <property type="term" value="F:cytoskeletal protein binding"/>
    <property type="evidence" value="ECO:0007669"/>
    <property type="project" value="InterPro"/>
</dbReference>
<dbReference type="GO" id="GO:0031032">
    <property type="term" value="P:actomyosin structure organization"/>
    <property type="evidence" value="ECO:0000318"/>
    <property type="project" value="GO_Central"/>
</dbReference>
<dbReference type="CDD" id="cd14473">
    <property type="entry name" value="FERM_B-lobe"/>
    <property type="match status" value="1"/>
</dbReference>
<dbReference type="CDD" id="cd17102">
    <property type="entry name" value="FERM_F1_FRMD3"/>
    <property type="match status" value="1"/>
</dbReference>
<dbReference type="FunFam" id="3.10.20.90:FF:000002">
    <property type="entry name" value="Erythrocyte protein band 4.1-like 3"/>
    <property type="match status" value="1"/>
</dbReference>
<dbReference type="FunFam" id="2.30.29.30:FF:000043">
    <property type="entry name" value="FERM domain-containing protein 5"/>
    <property type="match status" value="1"/>
</dbReference>
<dbReference type="FunFam" id="1.20.80.10:FF:000006">
    <property type="entry name" value="FERM domain-containing protein 5 isoform X1"/>
    <property type="match status" value="1"/>
</dbReference>
<dbReference type="Gene3D" id="1.20.80.10">
    <property type="match status" value="1"/>
</dbReference>
<dbReference type="Gene3D" id="3.10.20.90">
    <property type="entry name" value="Phosphatidylinositol 3-kinase Catalytic Subunit, Chain A, domain 1"/>
    <property type="match status" value="1"/>
</dbReference>
<dbReference type="Gene3D" id="2.30.29.30">
    <property type="entry name" value="Pleckstrin-homology domain (PH domain)/Phosphotyrosine-binding domain (PTB)"/>
    <property type="match status" value="1"/>
</dbReference>
<dbReference type="InterPro" id="IPR019749">
    <property type="entry name" value="Band_41_domain"/>
</dbReference>
<dbReference type="InterPro" id="IPR000798">
    <property type="entry name" value="Ez/rad/moesin-like"/>
</dbReference>
<dbReference type="InterPro" id="IPR014847">
    <property type="entry name" value="FA"/>
</dbReference>
<dbReference type="InterPro" id="IPR014352">
    <property type="entry name" value="FERM/acyl-CoA-bd_prot_sf"/>
</dbReference>
<dbReference type="InterPro" id="IPR035963">
    <property type="entry name" value="FERM_2"/>
</dbReference>
<dbReference type="InterPro" id="IPR019748">
    <property type="entry name" value="FERM_central"/>
</dbReference>
<dbReference type="InterPro" id="IPR019747">
    <property type="entry name" value="FERM_CS"/>
</dbReference>
<dbReference type="InterPro" id="IPR000299">
    <property type="entry name" value="FERM_domain"/>
</dbReference>
<dbReference type="InterPro" id="IPR018979">
    <property type="entry name" value="FERM_N"/>
</dbReference>
<dbReference type="InterPro" id="IPR018980">
    <property type="entry name" value="FERM_PH-like_C"/>
</dbReference>
<dbReference type="InterPro" id="IPR011993">
    <property type="entry name" value="PH-like_dom_sf"/>
</dbReference>
<dbReference type="InterPro" id="IPR029071">
    <property type="entry name" value="Ubiquitin-like_domsf"/>
</dbReference>
<dbReference type="PANTHER" id="PTHR23280">
    <property type="entry name" value="4.1 G PROTEIN"/>
    <property type="match status" value="1"/>
</dbReference>
<dbReference type="PANTHER" id="PTHR23280:SF8">
    <property type="entry name" value="FERM DOMAIN-CONTAINING PROTEIN 3"/>
    <property type="match status" value="1"/>
</dbReference>
<dbReference type="Pfam" id="PF08736">
    <property type="entry name" value="FA"/>
    <property type="match status" value="1"/>
</dbReference>
<dbReference type="Pfam" id="PF09380">
    <property type="entry name" value="FERM_C"/>
    <property type="match status" value="1"/>
</dbReference>
<dbReference type="Pfam" id="PF00373">
    <property type="entry name" value="FERM_M"/>
    <property type="match status" value="1"/>
</dbReference>
<dbReference type="Pfam" id="PF09379">
    <property type="entry name" value="FERM_N"/>
    <property type="match status" value="1"/>
</dbReference>
<dbReference type="PRINTS" id="PR00935">
    <property type="entry name" value="BAND41"/>
</dbReference>
<dbReference type="PRINTS" id="PR00661">
    <property type="entry name" value="ERMFAMILY"/>
</dbReference>
<dbReference type="SMART" id="SM00295">
    <property type="entry name" value="B41"/>
    <property type="match status" value="1"/>
</dbReference>
<dbReference type="SMART" id="SM01195">
    <property type="entry name" value="FA"/>
    <property type="match status" value="1"/>
</dbReference>
<dbReference type="SMART" id="SM01196">
    <property type="entry name" value="FERM_C"/>
    <property type="match status" value="1"/>
</dbReference>
<dbReference type="SUPFAM" id="SSF50729">
    <property type="entry name" value="PH domain-like"/>
    <property type="match status" value="1"/>
</dbReference>
<dbReference type="SUPFAM" id="SSF47031">
    <property type="entry name" value="Second domain of FERM"/>
    <property type="match status" value="1"/>
</dbReference>
<dbReference type="SUPFAM" id="SSF54236">
    <property type="entry name" value="Ubiquitin-like"/>
    <property type="match status" value="1"/>
</dbReference>
<dbReference type="PROSITE" id="PS00660">
    <property type="entry name" value="FERM_1"/>
    <property type="match status" value="1"/>
</dbReference>
<dbReference type="PROSITE" id="PS50057">
    <property type="entry name" value="FERM_3"/>
    <property type="match status" value="1"/>
</dbReference>
<protein>
    <recommendedName>
        <fullName>FERM domain-containing protein 3</fullName>
    </recommendedName>
    <alternativeName>
        <fullName>Band 4.1-like protein 4O</fullName>
    </alternativeName>
    <alternativeName>
        <fullName>Ovary type protein 4.1</fullName>
        <shortName>4.1O</shortName>
    </alternativeName>
</protein>